<reference key="1">
    <citation type="journal article" date="2002" name="Nature">
        <title>The genome sequence of Schizosaccharomyces pombe.</title>
        <authorList>
            <person name="Wood V."/>
            <person name="Gwilliam R."/>
            <person name="Rajandream M.A."/>
            <person name="Lyne M.H."/>
            <person name="Lyne R."/>
            <person name="Stewart A."/>
            <person name="Sgouros J.G."/>
            <person name="Peat N."/>
            <person name="Hayles J."/>
            <person name="Baker S.G."/>
            <person name="Basham D."/>
            <person name="Bowman S."/>
            <person name="Brooks K."/>
            <person name="Brown D."/>
            <person name="Brown S."/>
            <person name="Chillingworth T."/>
            <person name="Churcher C.M."/>
            <person name="Collins M."/>
            <person name="Connor R."/>
            <person name="Cronin A."/>
            <person name="Davis P."/>
            <person name="Feltwell T."/>
            <person name="Fraser A."/>
            <person name="Gentles S."/>
            <person name="Goble A."/>
            <person name="Hamlin N."/>
            <person name="Harris D.E."/>
            <person name="Hidalgo J."/>
            <person name="Hodgson G."/>
            <person name="Holroyd S."/>
            <person name="Hornsby T."/>
            <person name="Howarth S."/>
            <person name="Huckle E.J."/>
            <person name="Hunt S."/>
            <person name="Jagels K."/>
            <person name="James K.D."/>
            <person name="Jones L."/>
            <person name="Jones M."/>
            <person name="Leather S."/>
            <person name="McDonald S."/>
            <person name="McLean J."/>
            <person name="Mooney P."/>
            <person name="Moule S."/>
            <person name="Mungall K.L."/>
            <person name="Murphy L.D."/>
            <person name="Niblett D."/>
            <person name="Odell C."/>
            <person name="Oliver K."/>
            <person name="O'Neil S."/>
            <person name="Pearson D."/>
            <person name="Quail M.A."/>
            <person name="Rabbinowitsch E."/>
            <person name="Rutherford K.M."/>
            <person name="Rutter S."/>
            <person name="Saunders D."/>
            <person name="Seeger K."/>
            <person name="Sharp S."/>
            <person name="Skelton J."/>
            <person name="Simmonds M.N."/>
            <person name="Squares R."/>
            <person name="Squares S."/>
            <person name="Stevens K."/>
            <person name="Taylor K."/>
            <person name="Taylor R.G."/>
            <person name="Tivey A."/>
            <person name="Walsh S.V."/>
            <person name="Warren T."/>
            <person name="Whitehead S."/>
            <person name="Woodward J.R."/>
            <person name="Volckaert G."/>
            <person name="Aert R."/>
            <person name="Robben J."/>
            <person name="Grymonprez B."/>
            <person name="Weltjens I."/>
            <person name="Vanstreels E."/>
            <person name="Rieger M."/>
            <person name="Schaefer M."/>
            <person name="Mueller-Auer S."/>
            <person name="Gabel C."/>
            <person name="Fuchs M."/>
            <person name="Duesterhoeft A."/>
            <person name="Fritzc C."/>
            <person name="Holzer E."/>
            <person name="Moestl D."/>
            <person name="Hilbert H."/>
            <person name="Borzym K."/>
            <person name="Langer I."/>
            <person name="Beck A."/>
            <person name="Lehrach H."/>
            <person name="Reinhardt R."/>
            <person name="Pohl T.M."/>
            <person name="Eger P."/>
            <person name="Zimmermann W."/>
            <person name="Wedler H."/>
            <person name="Wambutt R."/>
            <person name="Purnelle B."/>
            <person name="Goffeau A."/>
            <person name="Cadieu E."/>
            <person name="Dreano S."/>
            <person name="Gloux S."/>
            <person name="Lelaure V."/>
            <person name="Mottier S."/>
            <person name="Galibert F."/>
            <person name="Aves S.J."/>
            <person name="Xiang Z."/>
            <person name="Hunt C."/>
            <person name="Moore K."/>
            <person name="Hurst S.M."/>
            <person name="Lucas M."/>
            <person name="Rochet M."/>
            <person name="Gaillardin C."/>
            <person name="Tallada V.A."/>
            <person name="Garzon A."/>
            <person name="Thode G."/>
            <person name="Daga R.R."/>
            <person name="Cruzado L."/>
            <person name="Jimenez J."/>
            <person name="Sanchez M."/>
            <person name="del Rey F."/>
            <person name="Benito J."/>
            <person name="Dominguez A."/>
            <person name="Revuelta J.L."/>
            <person name="Moreno S."/>
            <person name="Armstrong J."/>
            <person name="Forsburg S.L."/>
            <person name="Cerutti L."/>
            <person name="Lowe T."/>
            <person name="McCombie W.R."/>
            <person name="Paulsen I."/>
            <person name="Potashkin J."/>
            <person name="Shpakovski G.V."/>
            <person name="Ussery D."/>
            <person name="Barrell B.G."/>
            <person name="Nurse P."/>
        </authorList>
    </citation>
    <scope>NUCLEOTIDE SEQUENCE [LARGE SCALE GENOMIC DNA]</scope>
    <source>
        <strain>972 / ATCC 24843</strain>
    </source>
</reference>
<reference key="2">
    <citation type="journal article" date="2006" name="Nat. Biotechnol.">
        <title>ORFeome cloning and global analysis of protein localization in the fission yeast Schizosaccharomyces pombe.</title>
        <authorList>
            <person name="Matsuyama A."/>
            <person name="Arai R."/>
            <person name="Yashiroda Y."/>
            <person name="Shirai A."/>
            <person name="Kamata A."/>
            <person name="Sekido S."/>
            <person name="Kobayashi Y."/>
            <person name="Hashimoto A."/>
            <person name="Hamamoto M."/>
            <person name="Hiraoka Y."/>
            <person name="Horinouchi S."/>
            <person name="Yoshida M."/>
        </authorList>
    </citation>
    <scope>SUBCELLULAR LOCATION [LARGE SCALE ANALYSIS]</scope>
</reference>
<reference key="3">
    <citation type="journal article" date="2007" name="Microbiology">
        <title>Essential roles of class E Vps proteins for sorting into multivesicular bodies in Schizosaccharomyces pombe.</title>
        <authorList>
            <person name="Iwaki T."/>
            <person name="Onishi M."/>
            <person name="Ikeuchi M."/>
            <person name="Kita A."/>
            <person name="Sugiura R."/>
            <person name="Giga-Hama Y."/>
            <person name="Fukui Y."/>
            <person name="Takegawa K."/>
        </authorList>
    </citation>
    <scope>DISRUPTION PHENOTYPE</scope>
</reference>
<accession>O14177</accession>
<accession>Q9P6Q7</accession>
<feature type="chain" id="PRO_0000116658" description="ESCRT-III complex subunit did4">
    <location>
        <begin position="1"/>
        <end position="210"/>
    </location>
</feature>
<feature type="region of interest" description="Disordered" evidence="3">
    <location>
        <begin position="1"/>
        <end position="38"/>
    </location>
</feature>
<feature type="coiled-coil region" evidence="2">
    <location>
        <begin position="15"/>
        <end position="97"/>
    </location>
</feature>
<feature type="compositionally biased region" description="Basic and acidic residues" evidence="3">
    <location>
        <begin position="26"/>
        <end position="38"/>
    </location>
</feature>
<sequence length="210" mass="23928">MGLTSWLFGGGKSPQEQLRAHQRSLGRAERELDRERTKLDQRERALIQEIKGSAKAGNTGAARIQARDLMRLRNSRKKMMNAKTQLQAISLRLQTMRTSEQMMQSMRGATRLLTGMNKSMNIPAMARITQQFERENEIMEQRQEMIDENMDDALEEDDEEEADELVNKVLDEIGVDLSQGLPDAATQIGTVPELKTEDNLQARLDELAKR</sequence>
<gene>
    <name type="primary">did4</name>
    <name type="synonym">vps2</name>
    <name type="ORF">SPAC4F8.01</name>
    <name type="ORF">SPAC644.03c</name>
</gene>
<keyword id="KW-0175">Coiled coil</keyword>
<keyword id="KW-0963">Cytoplasm</keyword>
<keyword id="KW-0967">Endosome</keyword>
<keyword id="KW-0472">Membrane</keyword>
<keyword id="KW-0597">Phosphoprotein</keyword>
<keyword id="KW-0653">Protein transport</keyword>
<keyword id="KW-1185">Reference proteome</keyword>
<keyword id="KW-0813">Transport</keyword>
<dbReference type="EMBL" id="CU329670">
    <property type="protein sequence ID" value="CAB11048.3"/>
    <property type="molecule type" value="Genomic_DNA"/>
</dbReference>
<dbReference type="PIR" id="T38831">
    <property type="entry name" value="T38831"/>
</dbReference>
<dbReference type="RefSeq" id="NP_593871.3">
    <property type="nucleotide sequence ID" value="NM_001019300.3"/>
</dbReference>
<dbReference type="SMR" id="O14177"/>
<dbReference type="BioGRID" id="279939">
    <property type="interactions" value="10"/>
</dbReference>
<dbReference type="FunCoup" id="O14177">
    <property type="interactions" value="448"/>
</dbReference>
<dbReference type="STRING" id="284812.O14177"/>
<dbReference type="iPTMnet" id="O14177"/>
<dbReference type="PaxDb" id="4896-SPAC4F8.01.1"/>
<dbReference type="EnsemblFungi" id="SPAC4F8.01.1">
    <property type="protein sequence ID" value="SPAC4F8.01.1:pep"/>
    <property type="gene ID" value="SPAC4F8.01"/>
</dbReference>
<dbReference type="GeneID" id="2543521"/>
<dbReference type="KEGG" id="spo:2543521"/>
<dbReference type="PomBase" id="SPAC4F8.01">
    <property type="gene designation" value="did4"/>
</dbReference>
<dbReference type="VEuPathDB" id="FungiDB:SPAC4F8.01"/>
<dbReference type="eggNOG" id="KOG3230">
    <property type="taxonomic scope" value="Eukaryota"/>
</dbReference>
<dbReference type="HOGENOM" id="CLU_069208_1_0_1"/>
<dbReference type="InParanoid" id="O14177"/>
<dbReference type="OMA" id="KMAKMNQ"/>
<dbReference type="PhylomeDB" id="O14177"/>
<dbReference type="Reactome" id="R-SPO-1632852">
    <property type="pathway name" value="Macroautophagy"/>
</dbReference>
<dbReference type="Reactome" id="R-SPO-917729">
    <property type="pathway name" value="Endosomal Sorting Complex Required For Transport (ESCRT)"/>
</dbReference>
<dbReference type="Reactome" id="R-SPO-9668328">
    <property type="pathway name" value="Sealing of the nuclear envelope (NE) by ESCRT-III"/>
</dbReference>
<dbReference type="PRO" id="PR:O14177"/>
<dbReference type="Proteomes" id="UP000002485">
    <property type="component" value="Chromosome I"/>
</dbReference>
<dbReference type="GO" id="GO:0005737">
    <property type="term" value="C:cytoplasm"/>
    <property type="evidence" value="ECO:0007005"/>
    <property type="project" value="PomBase"/>
</dbReference>
<dbReference type="GO" id="GO:0000815">
    <property type="term" value="C:ESCRT III complex"/>
    <property type="evidence" value="ECO:0000318"/>
    <property type="project" value="GO_Central"/>
</dbReference>
<dbReference type="GO" id="GO:0180028">
    <property type="term" value="C:mitotic spindle pole body attachment site"/>
    <property type="evidence" value="ECO:0000269"/>
    <property type="project" value="PomBase"/>
</dbReference>
<dbReference type="GO" id="GO:0005771">
    <property type="term" value="C:multivesicular body"/>
    <property type="evidence" value="ECO:0000318"/>
    <property type="project" value="GO_Central"/>
</dbReference>
<dbReference type="GO" id="GO:0032509">
    <property type="term" value="P:endosome transport via multivesicular body sorting pathway"/>
    <property type="evidence" value="ECO:0000318"/>
    <property type="project" value="GO_Central"/>
</dbReference>
<dbReference type="GO" id="GO:0045324">
    <property type="term" value="P:late endosome to vacuole transport"/>
    <property type="evidence" value="ECO:0000315"/>
    <property type="project" value="PomBase"/>
</dbReference>
<dbReference type="GO" id="GO:0007084">
    <property type="term" value="P:mitotic nuclear membrane reassembly"/>
    <property type="evidence" value="ECO:0000269"/>
    <property type="project" value="PomBase"/>
</dbReference>
<dbReference type="GO" id="GO:0015031">
    <property type="term" value="P:protein transport"/>
    <property type="evidence" value="ECO:0000318"/>
    <property type="project" value="GO_Central"/>
</dbReference>
<dbReference type="GO" id="GO:0043328">
    <property type="term" value="P:protein transport to vacuole involved in ubiquitin-dependent protein catabolic process via the multivesicular body sorting pathway"/>
    <property type="evidence" value="ECO:0000315"/>
    <property type="project" value="PomBase"/>
</dbReference>
<dbReference type="Gene3D" id="6.10.140.1230">
    <property type="match status" value="1"/>
</dbReference>
<dbReference type="InterPro" id="IPR005024">
    <property type="entry name" value="Snf7_fam"/>
</dbReference>
<dbReference type="PANTHER" id="PTHR10476">
    <property type="entry name" value="CHARGED MULTIVESICULAR BODY PROTEIN"/>
    <property type="match status" value="1"/>
</dbReference>
<dbReference type="Pfam" id="PF03357">
    <property type="entry name" value="Snf7"/>
    <property type="match status" value="1"/>
</dbReference>
<protein>
    <recommendedName>
        <fullName>ESCRT-III complex subunit did4</fullName>
    </recommendedName>
    <alternativeName>
        <fullName>Vacuolar protein-sorting-associated protein 2</fullName>
    </alternativeName>
</protein>
<name>DID4_SCHPO</name>
<evidence type="ECO:0000250" key="1"/>
<evidence type="ECO:0000255" key="2"/>
<evidence type="ECO:0000256" key="3">
    <source>
        <dbReference type="SAM" id="MobiDB-lite"/>
    </source>
</evidence>
<evidence type="ECO:0000269" key="4">
    <source>
    </source>
</evidence>
<evidence type="ECO:0000269" key="5">
    <source>
    </source>
</evidence>
<evidence type="ECO:0000305" key="6"/>
<proteinExistence type="inferred from homology"/>
<organism>
    <name type="scientific">Schizosaccharomyces pombe (strain 972 / ATCC 24843)</name>
    <name type="common">Fission yeast</name>
    <dbReference type="NCBI Taxonomy" id="284812"/>
    <lineage>
        <taxon>Eukaryota</taxon>
        <taxon>Fungi</taxon>
        <taxon>Dikarya</taxon>
        <taxon>Ascomycota</taxon>
        <taxon>Taphrinomycotina</taxon>
        <taxon>Schizosaccharomycetes</taxon>
        <taxon>Schizosaccharomycetales</taxon>
        <taxon>Schizosaccharomycetaceae</taxon>
        <taxon>Schizosaccharomyces</taxon>
    </lineage>
</organism>
<comment type="function">
    <text evidence="1">Required for the sorting and concentration of proteins resulting in the entry of these proteins into the invaginating vesicles of the multivesicular body (MVB). Acts a component of the ESCRT-III complex, which appears to be critical for late steps in MVB sorting, such as membrane invagination and final cargo sorting and recruitment of late-acting components of the sorting machinery. The MVB pathway requires the sequential function of ESCRT-O, -I,-II and -III complex assemblies (By similarity).</text>
</comment>
<comment type="subunit">
    <text evidence="1">Core component of the ESCRT-III complex (endosomal sorting required for transport complex III). ESCRT-III appears to be sequentially assembled as a flat lattice on the endosome membrane (By similarity).</text>
</comment>
<comment type="subcellular location">
    <subcellularLocation>
        <location evidence="4">Cytoplasm</location>
    </subcellularLocation>
    <subcellularLocation>
        <location evidence="1">Endosome membrane</location>
        <topology evidence="1">Peripheral membrane protein</topology>
    </subcellularLocation>
</comment>
<comment type="disruption phenotype">
    <text evidence="5">Leads to multivesicular bodies sorting defects.</text>
</comment>
<comment type="similarity">
    <text evidence="6">Belongs to the SNF7 family.</text>
</comment>